<organism>
    <name type="scientific">Pseudarthrobacter chlorophenolicus (strain ATCC 700700 / DSM 12829 / CIP 107037 / JCM 12360 / KCTC 9906 / NCIMB 13794 / A6)</name>
    <name type="common">Arthrobacter chlorophenolicus</name>
    <dbReference type="NCBI Taxonomy" id="452863"/>
    <lineage>
        <taxon>Bacteria</taxon>
        <taxon>Bacillati</taxon>
        <taxon>Actinomycetota</taxon>
        <taxon>Actinomycetes</taxon>
        <taxon>Micrococcales</taxon>
        <taxon>Micrococcaceae</taxon>
        <taxon>Pseudarthrobacter</taxon>
    </lineage>
</organism>
<evidence type="ECO:0000255" key="1">
    <source>
        <dbReference type="HAMAP-Rule" id="MF_00040"/>
    </source>
</evidence>
<protein>
    <recommendedName>
        <fullName evidence="1">Ribosome-recycling factor</fullName>
        <shortName evidence="1">RRF</shortName>
    </recommendedName>
    <alternativeName>
        <fullName evidence="1">Ribosome-releasing factor</fullName>
    </alternativeName>
</protein>
<name>RRF_PSECP</name>
<gene>
    <name evidence="1" type="primary">frr</name>
    <name type="ordered locus">Achl_1387</name>
</gene>
<keyword id="KW-0963">Cytoplasm</keyword>
<keyword id="KW-0648">Protein biosynthesis</keyword>
<comment type="function">
    <text evidence="1">Responsible for the release of ribosomes from messenger RNA at the termination of protein biosynthesis. May increase the efficiency of translation by recycling ribosomes from one round of translation to another.</text>
</comment>
<comment type="subcellular location">
    <subcellularLocation>
        <location evidence="1">Cytoplasm</location>
    </subcellularLocation>
</comment>
<comment type="similarity">
    <text evidence="1">Belongs to the RRF family.</text>
</comment>
<sequence>MIEETLLEAEEKMDKAVEVAKEDFASIRTGRANPGLYNRVLVDYYGSPTPLQQLASFAIPDARTILITPFDKTALRDIERALSDSEVGANPSNDGNVIRITIPELTKERRKEYVKIVKTKGEDAKVSIRNIRRKAKEALDRLVKDGEAGEDEGTRAEKELDGLTKAHVDGIDELLKRKEAELLEV</sequence>
<dbReference type="EMBL" id="CP001341">
    <property type="protein sequence ID" value="ACL39377.1"/>
    <property type="molecule type" value="Genomic_DNA"/>
</dbReference>
<dbReference type="RefSeq" id="WP_015936600.1">
    <property type="nucleotide sequence ID" value="NC_011886.1"/>
</dbReference>
<dbReference type="SMR" id="B8HFN8"/>
<dbReference type="STRING" id="452863.Achl_1387"/>
<dbReference type="KEGG" id="ach:Achl_1387"/>
<dbReference type="eggNOG" id="COG0233">
    <property type="taxonomic scope" value="Bacteria"/>
</dbReference>
<dbReference type="HOGENOM" id="CLU_073981_2_0_11"/>
<dbReference type="OrthoDB" id="9804006at2"/>
<dbReference type="Proteomes" id="UP000002505">
    <property type="component" value="Chromosome"/>
</dbReference>
<dbReference type="GO" id="GO:0005737">
    <property type="term" value="C:cytoplasm"/>
    <property type="evidence" value="ECO:0007669"/>
    <property type="project" value="UniProtKB-SubCell"/>
</dbReference>
<dbReference type="GO" id="GO:0043023">
    <property type="term" value="F:ribosomal large subunit binding"/>
    <property type="evidence" value="ECO:0007669"/>
    <property type="project" value="TreeGrafter"/>
</dbReference>
<dbReference type="GO" id="GO:0006415">
    <property type="term" value="P:translational termination"/>
    <property type="evidence" value="ECO:0007669"/>
    <property type="project" value="UniProtKB-UniRule"/>
</dbReference>
<dbReference type="CDD" id="cd00520">
    <property type="entry name" value="RRF"/>
    <property type="match status" value="1"/>
</dbReference>
<dbReference type="FunFam" id="1.10.132.20:FF:000001">
    <property type="entry name" value="Ribosome-recycling factor"/>
    <property type="match status" value="1"/>
</dbReference>
<dbReference type="FunFam" id="3.30.1360.40:FF:000001">
    <property type="entry name" value="Ribosome-recycling factor"/>
    <property type="match status" value="1"/>
</dbReference>
<dbReference type="Gene3D" id="3.30.1360.40">
    <property type="match status" value="1"/>
</dbReference>
<dbReference type="Gene3D" id="1.10.132.20">
    <property type="entry name" value="Ribosome-recycling factor"/>
    <property type="match status" value="1"/>
</dbReference>
<dbReference type="HAMAP" id="MF_00040">
    <property type="entry name" value="RRF"/>
    <property type="match status" value="1"/>
</dbReference>
<dbReference type="InterPro" id="IPR002661">
    <property type="entry name" value="Ribosome_recyc_fac"/>
</dbReference>
<dbReference type="InterPro" id="IPR023584">
    <property type="entry name" value="Ribosome_recyc_fac_dom"/>
</dbReference>
<dbReference type="InterPro" id="IPR036191">
    <property type="entry name" value="RRF_sf"/>
</dbReference>
<dbReference type="NCBIfam" id="TIGR00496">
    <property type="entry name" value="frr"/>
    <property type="match status" value="1"/>
</dbReference>
<dbReference type="PANTHER" id="PTHR20982:SF3">
    <property type="entry name" value="MITOCHONDRIAL RIBOSOME RECYCLING FACTOR PSEUDO 1"/>
    <property type="match status" value="1"/>
</dbReference>
<dbReference type="PANTHER" id="PTHR20982">
    <property type="entry name" value="RIBOSOME RECYCLING FACTOR"/>
    <property type="match status" value="1"/>
</dbReference>
<dbReference type="Pfam" id="PF01765">
    <property type="entry name" value="RRF"/>
    <property type="match status" value="1"/>
</dbReference>
<dbReference type="SUPFAM" id="SSF55194">
    <property type="entry name" value="Ribosome recycling factor, RRF"/>
    <property type="match status" value="1"/>
</dbReference>
<proteinExistence type="inferred from homology"/>
<accession>B8HFN8</accession>
<feature type="chain" id="PRO_1000194892" description="Ribosome-recycling factor">
    <location>
        <begin position="1"/>
        <end position="185"/>
    </location>
</feature>
<reference key="1">
    <citation type="submission" date="2009-01" db="EMBL/GenBank/DDBJ databases">
        <title>Complete sequence of chromosome of Arthrobacter chlorophenolicus A6.</title>
        <authorList>
            <consortium name="US DOE Joint Genome Institute"/>
            <person name="Lucas S."/>
            <person name="Copeland A."/>
            <person name="Lapidus A."/>
            <person name="Glavina del Rio T."/>
            <person name="Tice H."/>
            <person name="Bruce D."/>
            <person name="Goodwin L."/>
            <person name="Pitluck S."/>
            <person name="Goltsman E."/>
            <person name="Clum A."/>
            <person name="Larimer F."/>
            <person name="Land M."/>
            <person name="Hauser L."/>
            <person name="Kyrpides N."/>
            <person name="Mikhailova N."/>
            <person name="Jansson J."/>
            <person name="Richardson P."/>
        </authorList>
    </citation>
    <scope>NUCLEOTIDE SEQUENCE [LARGE SCALE GENOMIC DNA]</scope>
    <source>
        <strain>ATCC 700700 / DSM 12829 / CIP 107037 / JCM 12360 / KCTC 9906 / NCIMB 13794 / A6</strain>
    </source>
</reference>